<name>DXR_RUEST</name>
<reference key="1">
    <citation type="submission" date="2006-05" db="EMBL/GenBank/DDBJ databases">
        <title>Complete sequence of chromosome of Silicibacter sp. TM1040.</title>
        <authorList>
            <consortium name="US DOE Joint Genome Institute"/>
            <person name="Copeland A."/>
            <person name="Lucas S."/>
            <person name="Lapidus A."/>
            <person name="Barry K."/>
            <person name="Detter J.C."/>
            <person name="Glavina del Rio T."/>
            <person name="Hammon N."/>
            <person name="Israni S."/>
            <person name="Dalin E."/>
            <person name="Tice H."/>
            <person name="Pitluck S."/>
            <person name="Brettin T."/>
            <person name="Bruce D."/>
            <person name="Han C."/>
            <person name="Tapia R."/>
            <person name="Goodwin L."/>
            <person name="Thompson L.S."/>
            <person name="Gilna P."/>
            <person name="Schmutz J."/>
            <person name="Larimer F."/>
            <person name="Land M."/>
            <person name="Hauser L."/>
            <person name="Kyrpides N."/>
            <person name="Kim E."/>
            <person name="Belas R."/>
            <person name="Moran M.A."/>
            <person name="Buchan A."/>
            <person name="Gonzalez J.M."/>
            <person name="Schell M.A."/>
            <person name="Sun F."/>
            <person name="Richardson P."/>
        </authorList>
    </citation>
    <scope>NUCLEOTIDE SEQUENCE [LARGE SCALE GENOMIC DNA]</scope>
    <source>
        <strain>TM1040</strain>
    </source>
</reference>
<gene>
    <name evidence="1" type="primary">dxr</name>
    <name type="ordered locus">TM1040_1410</name>
</gene>
<proteinExistence type="inferred from homology"/>
<feature type="chain" id="PRO_1000020313" description="1-deoxy-D-xylulose 5-phosphate reductoisomerase">
    <location>
        <begin position="1"/>
        <end position="395"/>
    </location>
</feature>
<feature type="binding site" evidence="1">
    <location>
        <position position="15"/>
    </location>
    <ligand>
        <name>NADPH</name>
        <dbReference type="ChEBI" id="CHEBI:57783"/>
    </ligand>
</feature>
<feature type="binding site" evidence="1">
    <location>
        <position position="16"/>
    </location>
    <ligand>
        <name>NADPH</name>
        <dbReference type="ChEBI" id="CHEBI:57783"/>
    </ligand>
</feature>
<feature type="binding site" evidence="1">
    <location>
        <position position="17"/>
    </location>
    <ligand>
        <name>NADPH</name>
        <dbReference type="ChEBI" id="CHEBI:57783"/>
    </ligand>
</feature>
<feature type="binding site" evidence="1">
    <location>
        <position position="18"/>
    </location>
    <ligand>
        <name>NADPH</name>
        <dbReference type="ChEBI" id="CHEBI:57783"/>
    </ligand>
</feature>
<feature type="binding site" evidence="1">
    <location>
        <position position="41"/>
    </location>
    <ligand>
        <name>NADPH</name>
        <dbReference type="ChEBI" id="CHEBI:57783"/>
    </ligand>
</feature>
<feature type="binding site" evidence="1">
    <location>
        <position position="43"/>
    </location>
    <ligand>
        <name>NADPH</name>
        <dbReference type="ChEBI" id="CHEBI:57783"/>
    </ligand>
</feature>
<feature type="binding site" evidence="1">
    <location>
        <position position="126"/>
    </location>
    <ligand>
        <name>NADPH</name>
        <dbReference type="ChEBI" id="CHEBI:57783"/>
    </ligand>
</feature>
<feature type="binding site" evidence="1">
    <location>
        <position position="127"/>
    </location>
    <ligand>
        <name>1-deoxy-D-xylulose 5-phosphate</name>
        <dbReference type="ChEBI" id="CHEBI:57792"/>
    </ligand>
</feature>
<feature type="binding site" evidence="1">
    <location>
        <position position="128"/>
    </location>
    <ligand>
        <name>NADPH</name>
        <dbReference type="ChEBI" id="CHEBI:57783"/>
    </ligand>
</feature>
<feature type="binding site" evidence="1">
    <location>
        <position position="152"/>
    </location>
    <ligand>
        <name>Mn(2+)</name>
        <dbReference type="ChEBI" id="CHEBI:29035"/>
    </ligand>
</feature>
<feature type="binding site" evidence="1">
    <location>
        <position position="153"/>
    </location>
    <ligand>
        <name>1-deoxy-D-xylulose 5-phosphate</name>
        <dbReference type="ChEBI" id="CHEBI:57792"/>
    </ligand>
</feature>
<feature type="binding site" evidence="1">
    <location>
        <position position="154"/>
    </location>
    <ligand>
        <name>1-deoxy-D-xylulose 5-phosphate</name>
        <dbReference type="ChEBI" id="CHEBI:57792"/>
    </ligand>
</feature>
<feature type="binding site" evidence="1">
    <location>
        <position position="154"/>
    </location>
    <ligand>
        <name>Mn(2+)</name>
        <dbReference type="ChEBI" id="CHEBI:29035"/>
    </ligand>
</feature>
<feature type="binding site" evidence="1">
    <location>
        <position position="178"/>
    </location>
    <ligand>
        <name>1-deoxy-D-xylulose 5-phosphate</name>
        <dbReference type="ChEBI" id="CHEBI:57792"/>
    </ligand>
</feature>
<feature type="binding site" evidence="1">
    <location>
        <position position="201"/>
    </location>
    <ligand>
        <name>1-deoxy-D-xylulose 5-phosphate</name>
        <dbReference type="ChEBI" id="CHEBI:57792"/>
    </ligand>
</feature>
<feature type="binding site" evidence="1">
    <location>
        <position position="207"/>
    </location>
    <ligand>
        <name>NADPH</name>
        <dbReference type="ChEBI" id="CHEBI:57783"/>
    </ligand>
</feature>
<feature type="binding site" evidence="1">
    <location>
        <position position="214"/>
    </location>
    <ligand>
        <name>1-deoxy-D-xylulose 5-phosphate</name>
        <dbReference type="ChEBI" id="CHEBI:57792"/>
    </ligand>
</feature>
<feature type="binding site" evidence="1">
    <location>
        <position position="219"/>
    </location>
    <ligand>
        <name>1-deoxy-D-xylulose 5-phosphate</name>
        <dbReference type="ChEBI" id="CHEBI:57792"/>
    </ligand>
</feature>
<feature type="binding site" evidence="1">
    <location>
        <position position="220"/>
    </location>
    <ligand>
        <name>1-deoxy-D-xylulose 5-phosphate</name>
        <dbReference type="ChEBI" id="CHEBI:57792"/>
    </ligand>
</feature>
<feature type="binding site" evidence="1">
    <location>
        <position position="223"/>
    </location>
    <ligand>
        <name>1-deoxy-D-xylulose 5-phosphate</name>
        <dbReference type="ChEBI" id="CHEBI:57792"/>
    </ligand>
</feature>
<feature type="binding site" evidence="1">
    <location>
        <position position="223"/>
    </location>
    <ligand>
        <name>Mn(2+)</name>
        <dbReference type="ChEBI" id="CHEBI:29035"/>
    </ligand>
</feature>
<keyword id="KW-0414">Isoprene biosynthesis</keyword>
<keyword id="KW-0464">Manganese</keyword>
<keyword id="KW-0479">Metal-binding</keyword>
<keyword id="KW-0521">NADP</keyword>
<keyword id="KW-0560">Oxidoreductase</keyword>
<keyword id="KW-1185">Reference proteome</keyword>
<dbReference type="EC" id="1.1.1.267" evidence="1"/>
<dbReference type="EMBL" id="CP000377">
    <property type="protein sequence ID" value="ABF64143.1"/>
    <property type="molecule type" value="Genomic_DNA"/>
</dbReference>
<dbReference type="SMR" id="Q1GGS3"/>
<dbReference type="STRING" id="292414.TM1040_1410"/>
<dbReference type="KEGG" id="sit:TM1040_1410"/>
<dbReference type="eggNOG" id="COG0743">
    <property type="taxonomic scope" value="Bacteria"/>
</dbReference>
<dbReference type="HOGENOM" id="CLU_035714_4_0_5"/>
<dbReference type="UniPathway" id="UPA00056">
    <property type="reaction ID" value="UER00092"/>
</dbReference>
<dbReference type="Proteomes" id="UP000000636">
    <property type="component" value="Chromosome"/>
</dbReference>
<dbReference type="GO" id="GO:0030604">
    <property type="term" value="F:1-deoxy-D-xylulose-5-phosphate reductoisomerase activity"/>
    <property type="evidence" value="ECO:0007669"/>
    <property type="project" value="UniProtKB-UniRule"/>
</dbReference>
<dbReference type="GO" id="GO:0030145">
    <property type="term" value="F:manganese ion binding"/>
    <property type="evidence" value="ECO:0007669"/>
    <property type="project" value="TreeGrafter"/>
</dbReference>
<dbReference type="GO" id="GO:0070402">
    <property type="term" value="F:NADPH binding"/>
    <property type="evidence" value="ECO:0007669"/>
    <property type="project" value="InterPro"/>
</dbReference>
<dbReference type="GO" id="GO:0051484">
    <property type="term" value="P:isopentenyl diphosphate biosynthetic process, methylerythritol 4-phosphate pathway involved in terpenoid biosynthetic process"/>
    <property type="evidence" value="ECO:0007669"/>
    <property type="project" value="TreeGrafter"/>
</dbReference>
<dbReference type="FunFam" id="3.40.50.720:FF:000045">
    <property type="entry name" value="1-deoxy-D-xylulose 5-phosphate reductoisomerase"/>
    <property type="match status" value="1"/>
</dbReference>
<dbReference type="Gene3D" id="1.10.1740.10">
    <property type="match status" value="1"/>
</dbReference>
<dbReference type="Gene3D" id="3.40.50.720">
    <property type="entry name" value="NAD(P)-binding Rossmann-like Domain"/>
    <property type="match status" value="1"/>
</dbReference>
<dbReference type="HAMAP" id="MF_00183">
    <property type="entry name" value="DXP_reductoisom"/>
    <property type="match status" value="1"/>
</dbReference>
<dbReference type="InterPro" id="IPR003821">
    <property type="entry name" value="DXP_reductoisomerase"/>
</dbReference>
<dbReference type="InterPro" id="IPR013644">
    <property type="entry name" value="DXP_reductoisomerase_C"/>
</dbReference>
<dbReference type="InterPro" id="IPR013512">
    <property type="entry name" value="DXP_reductoisomerase_N"/>
</dbReference>
<dbReference type="InterPro" id="IPR026877">
    <property type="entry name" value="DXPR_C"/>
</dbReference>
<dbReference type="InterPro" id="IPR036169">
    <property type="entry name" value="DXPR_C_sf"/>
</dbReference>
<dbReference type="InterPro" id="IPR036291">
    <property type="entry name" value="NAD(P)-bd_dom_sf"/>
</dbReference>
<dbReference type="NCBIfam" id="TIGR00243">
    <property type="entry name" value="Dxr"/>
    <property type="match status" value="1"/>
</dbReference>
<dbReference type="PANTHER" id="PTHR30525">
    <property type="entry name" value="1-DEOXY-D-XYLULOSE 5-PHOSPHATE REDUCTOISOMERASE"/>
    <property type="match status" value="1"/>
</dbReference>
<dbReference type="PANTHER" id="PTHR30525:SF0">
    <property type="entry name" value="1-DEOXY-D-XYLULOSE 5-PHOSPHATE REDUCTOISOMERASE, CHLOROPLASTIC"/>
    <property type="match status" value="1"/>
</dbReference>
<dbReference type="Pfam" id="PF08436">
    <property type="entry name" value="DXP_redisom_C"/>
    <property type="match status" value="1"/>
</dbReference>
<dbReference type="Pfam" id="PF02670">
    <property type="entry name" value="DXP_reductoisom"/>
    <property type="match status" value="1"/>
</dbReference>
<dbReference type="Pfam" id="PF13288">
    <property type="entry name" value="DXPR_C"/>
    <property type="match status" value="1"/>
</dbReference>
<dbReference type="PIRSF" id="PIRSF006205">
    <property type="entry name" value="Dxp_reductismrs"/>
    <property type="match status" value="1"/>
</dbReference>
<dbReference type="SUPFAM" id="SSF69055">
    <property type="entry name" value="1-deoxy-D-xylulose-5-phosphate reductoisomerase, C-terminal domain"/>
    <property type="match status" value="1"/>
</dbReference>
<dbReference type="SUPFAM" id="SSF55347">
    <property type="entry name" value="Glyceraldehyde-3-phosphate dehydrogenase-like, C-terminal domain"/>
    <property type="match status" value="1"/>
</dbReference>
<dbReference type="SUPFAM" id="SSF51735">
    <property type="entry name" value="NAD(P)-binding Rossmann-fold domains"/>
    <property type="match status" value="1"/>
</dbReference>
<organism>
    <name type="scientific">Ruegeria sp. (strain TM1040)</name>
    <name type="common">Silicibacter sp.</name>
    <dbReference type="NCBI Taxonomy" id="292414"/>
    <lineage>
        <taxon>Bacteria</taxon>
        <taxon>Pseudomonadati</taxon>
        <taxon>Pseudomonadota</taxon>
        <taxon>Alphaproteobacteria</taxon>
        <taxon>Rhodobacterales</taxon>
        <taxon>Roseobacteraceae</taxon>
        <taxon>Ruegeria</taxon>
    </lineage>
</organism>
<evidence type="ECO:0000255" key="1">
    <source>
        <dbReference type="HAMAP-Rule" id="MF_00183"/>
    </source>
</evidence>
<comment type="function">
    <text evidence="1">Catalyzes the NADPH-dependent rearrangement and reduction of 1-deoxy-D-xylulose-5-phosphate (DXP) to 2-C-methyl-D-erythritol 4-phosphate (MEP).</text>
</comment>
<comment type="catalytic activity">
    <reaction evidence="1">
        <text>2-C-methyl-D-erythritol 4-phosphate + NADP(+) = 1-deoxy-D-xylulose 5-phosphate + NADPH + H(+)</text>
        <dbReference type="Rhea" id="RHEA:13717"/>
        <dbReference type="ChEBI" id="CHEBI:15378"/>
        <dbReference type="ChEBI" id="CHEBI:57783"/>
        <dbReference type="ChEBI" id="CHEBI:57792"/>
        <dbReference type="ChEBI" id="CHEBI:58262"/>
        <dbReference type="ChEBI" id="CHEBI:58349"/>
        <dbReference type="EC" id="1.1.1.267"/>
    </reaction>
    <physiologicalReaction direction="right-to-left" evidence="1">
        <dbReference type="Rhea" id="RHEA:13719"/>
    </physiologicalReaction>
</comment>
<comment type="cofactor">
    <cofactor evidence="1">
        <name>Mg(2+)</name>
        <dbReference type="ChEBI" id="CHEBI:18420"/>
    </cofactor>
    <cofactor evidence="1">
        <name>Mn(2+)</name>
        <dbReference type="ChEBI" id="CHEBI:29035"/>
    </cofactor>
</comment>
<comment type="pathway">
    <text evidence="1">Isoprenoid biosynthesis; isopentenyl diphosphate biosynthesis via DXP pathway; isopentenyl diphosphate from 1-deoxy-D-xylulose 5-phosphate: step 1/6.</text>
</comment>
<comment type="similarity">
    <text evidence="1">Belongs to the DXR family.</text>
</comment>
<sequence length="395" mass="41944">MHGVTMKKISIFGATGSIGQSTIDLIRRAPDAYDVVALSGGHNVAQLARDAIELQADIAITAHDARLEELRSALAGSGVEAASGAAALVEAASRPADWIMSAIVGAAGLAPGLKALEQGTTLALANKESLVCAGALLMQTAADHGARILPVDSEHSAVFQALVGERIEEVERIIITASGGAFRDWPLERLKTASLAEASSHPNWDMGQRITIDSASMFNKALEVIETREFFGVAPEQIEVLVHPQSLVHALVGFRDGALMSHLGAPDMRHAIGYALHWPDRNALPVARLDLAAIGQLEFRAPDLQRYPALRLAQEVMRRGGLSGAAFNGAKERALDHFIAGRIGFLDMASLTEEGLATLEAQPGLIDASMTLENVTRVDDLARRAVDQVVTQRTG</sequence>
<accession>Q1GGS3</accession>
<protein>
    <recommendedName>
        <fullName evidence="1">1-deoxy-D-xylulose 5-phosphate reductoisomerase</fullName>
        <shortName evidence="1">DXP reductoisomerase</shortName>
        <ecNumber evidence="1">1.1.1.267</ecNumber>
    </recommendedName>
    <alternativeName>
        <fullName evidence="1">1-deoxyxylulose-5-phosphate reductoisomerase</fullName>
    </alternativeName>
    <alternativeName>
        <fullName evidence="1">2-C-methyl-D-erythritol 4-phosphate synthase</fullName>
    </alternativeName>
</protein>